<protein>
    <recommendedName>
        <fullName evidence="1">Ribosomal protein bS6--L-glutamate ligase</fullName>
        <ecNumber evidence="1">6.3.2.-</ecNumber>
    </recommendedName>
    <alternativeName>
        <fullName evidence="1">Poly-alpha-glutamate synthase</fullName>
    </alternativeName>
    <alternativeName>
        <fullName evidence="1">Ribosomal protein bS6 modification protein</fullName>
    </alternativeName>
</protein>
<gene>
    <name evidence="1" type="primary">rimK</name>
    <name type="ordered locus">STY0908</name>
    <name type="ordered locus">t2021</name>
</gene>
<proteinExistence type="inferred from homology"/>
<comment type="function">
    <text evidence="1">An L-glutamate ligase that catalyzes the ATP-dependent post-translational addition of glutamate residues to the C-terminus of ribosomal protein bS6 (RpsF). Is also able to catalyze the synthesis of poly-alpha-glutamate in vitro, via ATP hydrolysis from unprotected glutamate as substrate. The number of glutamate residues added to either RpsF or to poly-alpha-glutamate changes with pH.</text>
</comment>
<comment type="cofactor">
    <cofactor evidence="1">
        <name>Mg(2+)</name>
        <dbReference type="ChEBI" id="CHEBI:18420"/>
    </cofactor>
    <cofactor evidence="1">
        <name>Mn(2+)</name>
        <dbReference type="ChEBI" id="CHEBI:29035"/>
    </cofactor>
    <text evidence="1">Binds 2 magnesium or manganese ions per subunit.</text>
</comment>
<comment type="similarity">
    <text evidence="1">Belongs to the RimK family.</text>
</comment>
<name>RIMK_SALTI</name>
<feature type="chain" id="PRO_0000205480" description="Ribosomal protein bS6--L-glutamate ligase">
    <location>
        <begin position="1"/>
        <end position="300"/>
    </location>
</feature>
<feature type="domain" description="ATP-grasp" evidence="1">
    <location>
        <begin position="104"/>
        <end position="287"/>
    </location>
</feature>
<feature type="binding site" evidence="1">
    <location>
        <position position="141"/>
    </location>
    <ligand>
        <name>ATP</name>
        <dbReference type="ChEBI" id="CHEBI:30616"/>
    </ligand>
</feature>
<feature type="binding site" evidence="1">
    <location>
        <begin position="178"/>
        <end position="179"/>
    </location>
    <ligand>
        <name>ATP</name>
        <dbReference type="ChEBI" id="CHEBI:30616"/>
    </ligand>
</feature>
<feature type="binding site" evidence="1">
    <location>
        <position position="187"/>
    </location>
    <ligand>
        <name>ATP</name>
        <dbReference type="ChEBI" id="CHEBI:30616"/>
    </ligand>
</feature>
<feature type="binding site" evidence="1">
    <location>
        <begin position="211"/>
        <end position="213"/>
    </location>
    <ligand>
        <name>ATP</name>
        <dbReference type="ChEBI" id="CHEBI:30616"/>
    </ligand>
</feature>
<feature type="binding site" evidence="1">
    <location>
        <position position="248"/>
    </location>
    <ligand>
        <name>Mg(2+)</name>
        <dbReference type="ChEBI" id="CHEBI:18420"/>
        <label>1</label>
    </ligand>
</feature>
<feature type="binding site" evidence="1">
    <location>
        <position position="248"/>
    </location>
    <ligand>
        <name>Mn(2+)</name>
        <dbReference type="ChEBI" id="CHEBI:29035"/>
        <label>1</label>
    </ligand>
</feature>
<feature type="binding site" evidence="1">
    <location>
        <position position="260"/>
    </location>
    <ligand>
        <name>Mg(2+)</name>
        <dbReference type="ChEBI" id="CHEBI:18420"/>
        <label>1</label>
    </ligand>
</feature>
<feature type="binding site" evidence="1">
    <location>
        <position position="260"/>
    </location>
    <ligand>
        <name>Mg(2+)</name>
        <dbReference type="ChEBI" id="CHEBI:18420"/>
        <label>2</label>
    </ligand>
</feature>
<feature type="binding site" evidence="1">
    <location>
        <position position="260"/>
    </location>
    <ligand>
        <name>Mn(2+)</name>
        <dbReference type="ChEBI" id="CHEBI:29035"/>
        <label>1</label>
    </ligand>
</feature>
<feature type="binding site" evidence="1">
    <location>
        <position position="260"/>
    </location>
    <ligand>
        <name>Mn(2+)</name>
        <dbReference type="ChEBI" id="CHEBI:29035"/>
        <label>2</label>
    </ligand>
</feature>
<feature type="binding site" evidence="1">
    <location>
        <position position="262"/>
    </location>
    <ligand>
        <name>Mg(2+)</name>
        <dbReference type="ChEBI" id="CHEBI:18420"/>
        <label>2</label>
    </ligand>
</feature>
<feature type="binding site" evidence="1">
    <location>
        <position position="262"/>
    </location>
    <ligand>
        <name>Mn(2+)</name>
        <dbReference type="ChEBI" id="CHEBI:29035"/>
        <label>2</label>
    </ligand>
</feature>
<keyword id="KW-0067">ATP-binding</keyword>
<keyword id="KW-0436">Ligase</keyword>
<keyword id="KW-0460">Magnesium</keyword>
<keyword id="KW-0464">Manganese</keyword>
<keyword id="KW-0479">Metal-binding</keyword>
<keyword id="KW-0547">Nucleotide-binding</keyword>
<keyword id="KW-0648">Protein biosynthesis</keyword>
<evidence type="ECO:0000255" key="1">
    <source>
        <dbReference type="HAMAP-Rule" id="MF_01552"/>
    </source>
</evidence>
<accession>P0A2U3</accession>
<accession>Q9Z5Z1</accession>
<organism>
    <name type="scientific">Salmonella typhi</name>
    <dbReference type="NCBI Taxonomy" id="90370"/>
    <lineage>
        <taxon>Bacteria</taxon>
        <taxon>Pseudomonadati</taxon>
        <taxon>Pseudomonadota</taxon>
        <taxon>Gammaproteobacteria</taxon>
        <taxon>Enterobacterales</taxon>
        <taxon>Enterobacteriaceae</taxon>
        <taxon>Salmonella</taxon>
    </lineage>
</organism>
<reference key="1">
    <citation type="journal article" date="2001" name="Nature">
        <title>Complete genome sequence of a multiple drug resistant Salmonella enterica serovar Typhi CT18.</title>
        <authorList>
            <person name="Parkhill J."/>
            <person name="Dougan G."/>
            <person name="James K.D."/>
            <person name="Thomson N.R."/>
            <person name="Pickard D."/>
            <person name="Wain J."/>
            <person name="Churcher C.M."/>
            <person name="Mungall K.L."/>
            <person name="Bentley S.D."/>
            <person name="Holden M.T.G."/>
            <person name="Sebaihia M."/>
            <person name="Baker S."/>
            <person name="Basham D."/>
            <person name="Brooks K."/>
            <person name="Chillingworth T."/>
            <person name="Connerton P."/>
            <person name="Cronin A."/>
            <person name="Davis P."/>
            <person name="Davies R.M."/>
            <person name="Dowd L."/>
            <person name="White N."/>
            <person name="Farrar J."/>
            <person name="Feltwell T."/>
            <person name="Hamlin N."/>
            <person name="Haque A."/>
            <person name="Hien T.T."/>
            <person name="Holroyd S."/>
            <person name="Jagels K."/>
            <person name="Krogh A."/>
            <person name="Larsen T.S."/>
            <person name="Leather S."/>
            <person name="Moule S."/>
            <person name="O'Gaora P."/>
            <person name="Parry C."/>
            <person name="Quail M.A."/>
            <person name="Rutherford K.M."/>
            <person name="Simmonds M."/>
            <person name="Skelton J."/>
            <person name="Stevens K."/>
            <person name="Whitehead S."/>
            <person name="Barrell B.G."/>
        </authorList>
    </citation>
    <scope>NUCLEOTIDE SEQUENCE [LARGE SCALE GENOMIC DNA]</scope>
    <source>
        <strain>CT18</strain>
    </source>
</reference>
<reference key="2">
    <citation type="journal article" date="2003" name="J. Bacteriol.">
        <title>Comparative genomics of Salmonella enterica serovar Typhi strains Ty2 and CT18.</title>
        <authorList>
            <person name="Deng W."/>
            <person name="Liou S.-R."/>
            <person name="Plunkett G. III"/>
            <person name="Mayhew G.F."/>
            <person name="Rose D.J."/>
            <person name="Burland V."/>
            <person name="Kodoyianni V."/>
            <person name="Schwartz D.C."/>
            <person name="Blattner F.R."/>
        </authorList>
    </citation>
    <scope>NUCLEOTIDE SEQUENCE [LARGE SCALE GENOMIC DNA]</scope>
    <source>
        <strain>ATCC 700931 / Ty2</strain>
    </source>
</reference>
<sequence>MKIAILSRDGTLYSCKRLREAAMRRGHLVEILDPLSCYMNINPAASSIHYKGRRLPHFDAVIPRIGSAITFYGTAALRQFELLGSYPLNESVAITRARDKLRSLQLLARQGIDLPITGIAHSPDDTSDLIKMVGGAPLVVKLVEGTQGIGVVLAETRQAAESVIDAFRGLNAHILVQEYIAEAKGCDIRCLVVGNEVVAAIERCAKAGDFRSNLHRGGVASIATITPRERDIAIKAAQTLGLDVAGVDILRAARGPLVMEVNASPGLEGIEKTTGVDIAGRMIQWIERHATPEFCLKIGG</sequence>
<dbReference type="EC" id="6.3.2.-" evidence="1"/>
<dbReference type="EMBL" id="AL513382">
    <property type="protein sequence ID" value="CAD05314.1"/>
    <property type="molecule type" value="Genomic_DNA"/>
</dbReference>
<dbReference type="EMBL" id="AE014613">
    <property type="protein sequence ID" value="AAO69633.1"/>
    <property type="molecule type" value="Genomic_DNA"/>
</dbReference>
<dbReference type="RefSeq" id="NP_455402.1">
    <property type="nucleotide sequence ID" value="NC_003198.1"/>
</dbReference>
<dbReference type="RefSeq" id="WP_000684361.1">
    <property type="nucleotide sequence ID" value="NZ_WSUR01000019.1"/>
</dbReference>
<dbReference type="SMR" id="P0A2U3"/>
<dbReference type="STRING" id="220341.gene:17584904"/>
<dbReference type="KEGG" id="stt:t2021"/>
<dbReference type="KEGG" id="sty:STY0908"/>
<dbReference type="PATRIC" id="fig|220341.7.peg.917"/>
<dbReference type="eggNOG" id="COG0189">
    <property type="taxonomic scope" value="Bacteria"/>
</dbReference>
<dbReference type="HOGENOM" id="CLU_054353_0_1_6"/>
<dbReference type="OMA" id="CYMNIAS"/>
<dbReference type="OrthoDB" id="3865600at2"/>
<dbReference type="Proteomes" id="UP000000541">
    <property type="component" value="Chromosome"/>
</dbReference>
<dbReference type="Proteomes" id="UP000002670">
    <property type="component" value="Chromosome"/>
</dbReference>
<dbReference type="GO" id="GO:0005737">
    <property type="term" value="C:cytoplasm"/>
    <property type="evidence" value="ECO:0007669"/>
    <property type="project" value="TreeGrafter"/>
</dbReference>
<dbReference type="GO" id="GO:0005524">
    <property type="term" value="F:ATP binding"/>
    <property type="evidence" value="ECO:0007669"/>
    <property type="project" value="UniProtKB-UniRule"/>
</dbReference>
<dbReference type="GO" id="GO:0046872">
    <property type="term" value="F:metal ion binding"/>
    <property type="evidence" value="ECO:0007669"/>
    <property type="project" value="UniProtKB-KW"/>
</dbReference>
<dbReference type="GO" id="GO:0018169">
    <property type="term" value="F:ribosomal S6-glutamic acid ligase activity"/>
    <property type="evidence" value="ECO:0007669"/>
    <property type="project" value="UniProtKB-UniRule"/>
</dbReference>
<dbReference type="GO" id="GO:0036211">
    <property type="term" value="P:protein modification process"/>
    <property type="evidence" value="ECO:0007669"/>
    <property type="project" value="InterPro"/>
</dbReference>
<dbReference type="GO" id="GO:0009432">
    <property type="term" value="P:SOS response"/>
    <property type="evidence" value="ECO:0007669"/>
    <property type="project" value="TreeGrafter"/>
</dbReference>
<dbReference type="GO" id="GO:0006412">
    <property type="term" value="P:translation"/>
    <property type="evidence" value="ECO:0007669"/>
    <property type="project" value="UniProtKB-KW"/>
</dbReference>
<dbReference type="FunFam" id="3.40.50.20:FF:000004">
    <property type="entry name" value="Probable alpha-L-glutamate ligase"/>
    <property type="match status" value="1"/>
</dbReference>
<dbReference type="FunFam" id="3.30.1490.20:FF:000005">
    <property type="entry name" value="Probable alpha-L-glutamate ligase 1"/>
    <property type="match status" value="1"/>
</dbReference>
<dbReference type="FunFam" id="3.30.470.20:FF:000016">
    <property type="entry name" value="Ribosomal protein S6--L-glutamate ligase"/>
    <property type="match status" value="1"/>
</dbReference>
<dbReference type="Gene3D" id="3.40.50.20">
    <property type="match status" value="1"/>
</dbReference>
<dbReference type="Gene3D" id="3.30.1490.20">
    <property type="entry name" value="ATP-grasp fold, A domain"/>
    <property type="match status" value="1"/>
</dbReference>
<dbReference type="Gene3D" id="3.30.470.20">
    <property type="entry name" value="ATP-grasp fold, B domain"/>
    <property type="match status" value="1"/>
</dbReference>
<dbReference type="HAMAP" id="MF_01552">
    <property type="entry name" value="RimK"/>
    <property type="match status" value="1"/>
</dbReference>
<dbReference type="InterPro" id="IPR011761">
    <property type="entry name" value="ATP-grasp"/>
</dbReference>
<dbReference type="InterPro" id="IPR013651">
    <property type="entry name" value="ATP-grasp_RimK-type"/>
</dbReference>
<dbReference type="InterPro" id="IPR013815">
    <property type="entry name" value="ATP_grasp_subdomain_1"/>
</dbReference>
<dbReference type="InterPro" id="IPR023533">
    <property type="entry name" value="RimK"/>
</dbReference>
<dbReference type="InterPro" id="IPR041107">
    <property type="entry name" value="Rimk_N"/>
</dbReference>
<dbReference type="InterPro" id="IPR004666">
    <property type="entry name" value="Rp_bS6_RimK/Lys_biosynth_LsyX"/>
</dbReference>
<dbReference type="NCBIfam" id="NF007764">
    <property type="entry name" value="PRK10446.1"/>
    <property type="match status" value="1"/>
</dbReference>
<dbReference type="NCBIfam" id="TIGR00768">
    <property type="entry name" value="rimK_fam"/>
    <property type="match status" value="1"/>
</dbReference>
<dbReference type="PANTHER" id="PTHR21621:SF7">
    <property type="entry name" value="RIBOSOMAL PROTEIN BS6--L-GLUTAMATE LIGASE"/>
    <property type="match status" value="1"/>
</dbReference>
<dbReference type="PANTHER" id="PTHR21621">
    <property type="entry name" value="RIBOSOMAL PROTEIN S6 MODIFICATION PROTEIN"/>
    <property type="match status" value="1"/>
</dbReference>
<dbReference type="Pfam" id="PF08443">
    <property type="entry name" value="RimK"/>
    <property type="match status" value="1"/>
</dbReference>
<dbReference type="Pfam" id="PF18030">
    <property type="entry name" value="Rimk_N"/>
    <property type="match status" value="1"/>
</dbReference>
<dbReference type="SUPFAM" id="SSF56059">
    <property type="entry name" value="Glutathione synthetase ATP-binding domain-like"/>
    <property type="match status" value="1"/>
</dbReference>
<dbReference type="PROSITE" id="PS50975">
    <property type="entry name" value="ATP_GRASP"/>
    <property type="match status" value="1"/>
</dbReference>